<reference key="1">
    <citation type="submission" date="2006-04" db="EMBL/GenBank/DDBJ databases">
        <title>Complete sequence of chromosome of Deinococcus geothermalis DSM 11300.</title>
        <authorList>
            <person name="Copeland A."/>
            <person name="Lucas S."/>
            <person name="Lapidus A."/>
            <person name="Barry K."/>
            <person name="Detter J.C."/>
            <person name="Glavina del Rio T."/>
            <person name="Hammon N."/>
            <person name="Israni S."/>
            <person name="Dalin E."/>
            <person name="Tice H."/>
            <person name="Pitluck S."/>
            <person name="Brettin T."/>
            <person name="Bruce D."/>
            <person name="Han C."/>
            <person name="Tapia R."/>
            <person name="Saunders E."/>
            <person name="Gilna P."/>
            <person name="Schmutz J."/>
            <person name="Larimer F."/>
            <person name="Land M."/>
            <person name="Hauser L."/>
            <person name="Kyrpides N."/>
            <person name="Kim E."/>
            <person name="Daly M.J."/>
            <person name="Fredrickson J.K."/>
            <person name="Makarova K.S."/>
            <person name="Gaidamakova E.K."/>
            <person name="Zhai M."/>
            <person name="Richardson P."/>
        </authorList>
    </citation>
    <scope>NUCLEOTIDE SEQUENCE [LARGE SCALE GENOMIC DNA]</scope>
    <source>
        <strain>DSM 11300 / CIP 105573 / AG-3a</strain>
    </source>
</reference>
<name>ILVC_DEIGD</name>
<evidence type="ECO:0000255" key="1">
    <source>
        <dbReference type="HAMAP-Rule" id="MF_00435"/>
    </source>
</evidence>
<evidence type="ECO:0000255" key="2">
    <source>
        <dbReference type="PROSITE-ProRule" id="PRU01197"/>
    </source>
</evidence>
<evidence type="ECO:0000255" key="3">
    <source>
        <dbReference type="PROSITE-ProRule" id="PRU01198"/>
    </source>
</evidence>
<comment type="function">
    <text evidence="1">Involved in the biosynthesis of branched-chain amino acids (BCAA). Catalyzes an alkyl-migration followed by a ketol-acid reduction of (S)-2-acetolactate (S2AL) to yield (R)-2,3-dihydroxy-isovalerate. In the isomerase reaction, S2AL is rearranged via a Mg-dependent methyl migration to produce 3-hydroxy-3-methyl-2-ketobutyrate (HMKB). In the reductase reaction, this 2-ketoacid undergoes a metal-dependent reduction by NADPH to yield (R)-2,3-dihydroxy-isovalerate.</text>
</comment>
<comment type="catalytic activity">
    <reaction evidence="1">
        <text>(2R)-2,3-dihydroxy-3-methylbutanoate + NADP(+) = (2S)-2-acetolactate + NADPH + H(+)</text>
        <dbReference type="Rhea" id="RHEA:22068"/>
        <dbReference type="ChEBI" id="CHEBI:15378"/>
        <dbReference type="ChEBI" id="CHEBI:49072"/>
        <dbReference type="ChEBI" id="CHEBI:57783"/>
        <dbReference type="ChEBI" id="CHEBI:58349"/>
        <dbReference type="ChEBI" id="CHEBI:58476"/>
        <dbReference type="EC" id="1.1.1.86"/>
    </reaction>
</comment>
<comment type="catalytic activity">
    <reaction evidence="1">
        <text>(2R,3R)-2,3-dihydroxy-3-methylpentanoate + NADP(+) = (S)-2-ethyl-2-hydroxy-3-oxobutanoate + NADPH + H(+)</text>
        <dbReference type="Rhea" id="RHEA:13493"/>
        <dbReference type="ChEBI" id="CHEBI:15378"/>
        <dbReference type="ChEBI" id="CHEBI:49256"/>
        <dbReference type="ChEBI" id="CHEBI:49258"/>
        <dbReference type="ChEBI" id="CHEBI:57783"/>
        <dbReference type="ChEBI" id="CHEBI:58349"/>
        <dbReference type="EC" id="1.1.1.86"/>
    </reaction>
</comment>
<comment type="cofactor">
    <cofactor evidence="1">
        <name>Mg(2+)</name>
        <dbReference type="ChEBI" id="CHEBI:18420"/>
    </cofactor>
    <text evidence="1">Binds 2 magnesium ions per subunit.</text>
</comment>
<comment type="pathway">
    <text evidence="1">Amino-acid biosynthesis; L-isoleucine biosynthesis; L-isoleucine from 2-oxobutanoate: step 2/4.</text>
</comment>
<comment type="pathway">
    <text evidence="1">Amino-acid biosynthesis; L-valine biosynthesis; L-valine from pyruvate: step 2/4.</text>
</comment>
<comment type="similarity">
    <text evidence="1">Belongs to the ketol-acid reductoisomerase family.</text>
</comment>
<sequence>MAATMYYDRDVSLSPIEDKLIAIIGYGSQAHAHAQNLRDSGLNVVVGLREGSPSRPKAEQAGLRVTSIEDATREADVIMLLIPDETQPKVYEESIAPNLTAGKALAFGHGFNIHFGRIKPPADVDVFLVAPKGPGHMLRRVYVDGAGMPSIFAVGQDASGNARDLALAYARGIGGTRAGVLETTFKEETETDLFGEQSVLCGGVTHLIQAGFETLVEAGYQPEIAYFETLHEVKLIVDLIYEKGFEGMRHSISNTAEYGDYVTGPRIITDETKATMKDVLSDIQSGKFARDFIHEAESGFPFMKEQRQKMRHHTLEVVGRELRSKMPFISKQELEV</sequence>
<protein>
    <recommendedName>
        <fullName evidence="1">Ketol-acid reductoisomerase (NADP(+))</fullName>
        <shortName evidence="1">KARI</shortName>
        <ecNumber evidence="1">1.1.1.86</ecNumber>
    </recommendedName>
    <alternativeName>
        <fullName evidence="1">Acetohydroxy-acid isomeroreductase</fullName>
        <shortName evidence="1">AHIR</shortName>
    </alternativeName>
    <alternativeName>
        <fullName evidence="1">Alpha-keto-beta-hydroxylacyl reductoisomerase</fullName>
    </alternativeName>
    <alternativeName>
        <fullName evidence="1">Ketol-acid reductoisomerase type 1</fullName>
    </alternativeName>
    <alternativeName>
        <fullName evidence="1">Ketol-acid reductoisomerase type I</fullName>
    </alternativeName>
</protein>
<feature type="chain" id="PRO_0000252756" description="Ketol-acid reductoisomerase (NADP(+))">
    <location>
        <begin position="1"/>
        <end position="336"/>
    </location>
</feature>
<feature type="domain" description="KARI N-terminal Rossmann" evidence="2">
    <location>
        <begin position="3"/>
        <end position="183"/>
    </location>
</feature>
<feature type="domain" description="KARI C-terminal knotted" evidence="3">
    <location>
        <begin position="184"/>
        <end position="329"/>
    </location>
</feature>
<feature type="active site" evidence="1">
    <location>
        <position position="109"/>
    </location>
</feature>
<feature type="binding site" evidence="1">
    <location>
        <begin position="26"/>
        <end position="29"/>
    </location>
    <ligand>
        <name>NADP(+)</name>
        <dbReference type="ChEBI" id="CHEBI:58349"/>
    </ligand>
</feature>
<feature type="binding site" evidence="1">
    <location>
        <position position="49"/>
    </location>
    <ligand>
        <name>NADP(+)</name>
        <dbReference type="ChEBI" id="CHEBI:58349"/>
    </ligand>
</feature>
<feature type="binding site" evidence="1">
    <location>
        <position position="52"/>
    </location>
    <ligand>
        <name>NADP(+)</name>
        <dbReference type="ChEBI" id="CHEBI:58349"/>
    </ligand>
</feature>
<feature type="binding site" evidence="1">
    <location>
        <position position="54"/>
    </location>
    <ligand>
        <name>NADP(+)</name>
        <dbReference type="ChEBI" id="CHEBI:58349"/>
    </ligand>
</feature>
<feature type="binding site" evidence="1">
    <location>
        <begin position="84"/>
        <end position="87"/>
    </location>
    <ligand>
        <name>NADP(+)</name>
        <dbReference type="ChEBI" id="CHEBI:58349"/>
    </ligand>
</feature>
<feature type="binding site" evidence="1">
    <location>
        <position position="135"/>
    </location>
    <ligand>
        <name>NADP(+)</name>
        <dbReference type="ChEBI" id="CHEBI:58349"/>
    </ligand>
</feature>
<feature type="binding site" evidence="1">
    <location>
        <position position="192"/>
    </location>
    <ligand>
        <name>Mg(2+)</name>
        <dbReference type="ChEBI" id="CHEBI:18420"/>
        <label>1</label>
    </ligand>
</feature>
<feature type="binding site" evidence="1">
    <location>
        <position position="192"/>
    </location>
    <ligand>
        <name>Mg(2+)</name>
        <dbReference type="ChEBI" id="CHEBI:18420"/>
        <label>2</label>
    </ligand>
</feature>
<feature type="binding site" evidence="1">
    <location>
        <position position="196"/>
    </location>
    <ligand>
        <name>Mg(2+)</name>
        <dbReference type="ChEBI" id="CHEBI:18420"/>
        <label>1</label>
    </ligand>
</feature>
<feature type="binding site" evidence="1">
    <location>
        <position position="228"/>
    </location>
    <ligand>
        <name>Mg(2+)</name>
        <dbReference type="ChEBI" id="CHEBI:18420"/>
        <label>2</label>
    </ligand>
</feature>
<feature type="binding site" evidence="1">
    <location>
        <position position="232"/>
    </location>
    <ligand>
        <name>Mg(2+)</name>
        <dbReference type="ChEBI" id="CHEBI:18420"/>
        <label>2</label>
    </ligand>
</feature>
<feature type="binding site" evidence="1">
    <location>
        <position position="253"/>
    </location>
    <ligand>
        <name>substrate</name>
    </ligand>
</feature>
<gene>
    <name evidence="1" type="primary">ilvC</name>
    <name type="ordered locus">Dgeo_0600</name>
</gene>
<proteinExistence type="inferred from homology"/>
<accession>Q1J0T2</accession>
<organism>
    <name type="scientific">Deinococcus geothermalis (strain DSM 11300 / CIP 105573 / AG-3a)</name>
    <dbReference type="NCBI Taxonomy" id="319795"/>
    <lineage>
        <taxon>Bacteria</taxon>
        <taxon>Thermotogati</taxon>
        <taxon>Deinococcota</taxon>
        <taxon>Deinococci</taxon>
        <taxon>Deinococcales</taxon>
        <taxon>Deinococcaceae</taxon>
        <taxon>Deinococcus</taxon>
    </lineage>
</organism>
<dbReference type="EC" id="1.1.1.86" evidence="1"/>
<dbReference type="EMBL" id="CP000359">
    <property type="protein sequence ID" value="ABF44902.1"/>
    <property type="molecule type" value="Genomic_DNA"/>
</dbReference>
<dbReference type="RefSeq" id="WP_011529744.1">
    <property type="nucleotide sequence ID" value="NC_008025.1"/>
</dbReference>
<dbReference type="SMR" id="Q1J0T2"/>
<dbReference type="STRING" id="319795.Dgeo_0600"/>
<dbReference type="KEGG" id="dge:Dgeo_0600"/>
<dbReference type="eggNOG" id="COG0059">
    <property type="taxonomic scope" value="Bacteria"/>
</dbReference>
<dbReference type="HOGENOM" id="CLU_033821_0_1_0"/>
<dbReference type="UniPathway" id="UPA00047">
    <property type="reaction ID" value="UER00056"/>
</dbReference>
<dbReference type="UniPathway" id="UPA00049">
    <property type="reaction ID" value="UER00060"/>
</dbReference>
<dbReference type="Proteomes" id="UP000002431">
    <property type="component" value="Chromosome"/>
</dbReference>
<dbReference type="GO" id="GO:0005829">
    <property type="term" value="C:cytosol"/>
    <property type="evidence" value="ECO:0007669"/>
    <property type="project" value="TreeGrafter"/>
</dbReference>
<dbReference type="GO" id="GO:0004455">
    <property type="term" value="F:ketol-acid reductoisomerase activity"/>
    <property type="evidence" value="ECO:0007669"/>
    <property type="project" value="UniProtKB-UniRule"/>
</dbReference>
<dbReference type="GO" id="GO:0000287">
    <property type="term" value="F:magnesium ion binding"/>
    <property type="evidence" value="ECO:0007669"/>
    <property type="project" value="UniProtKB-UniRule"/>
</dbReference>
<dbReference type="GO" id="GO:0050661">
    <property type="term" value="F:NADP binding"/>
    <property type="evidence" value="ECO:0007669"/>
    <property type="project" value="InterPro"/>
</dbReference>
<dbReference type="GO" id="GO:0009097">
    <property type="term" value="P:isoleucine biosynthetic process"/>
    <property type="evidence" value="ECO:0007669"/>
    <property type="project" value="UniProtKB-UniRule"/>
</dbReference>
<dbReference type="GO" id="GO:0009099">
    <property type="term" value="P:L-valine biosynthetic process"/>
    <property type="evidence" value="ECO:0007669"/>
    <property type="project" value="UniProtKB-UniRule"/>
</dbReference>
<dbReference type="FunFam" id="3.40.50.720:FF:000023">
    <property type="entry name" value="Ketol-acid reductoisomerase (NADP(+))"/>
    <property type="match status" value="1"/>
</dbReference>
<dbReference type="Gene3D" id="6.10.240.10">
    <property type="match status" value="1"/>
</dbReference>
<dbReference type="Gene3D" id="3.40.50.720">
    <property type="entry name" value="NAD(P)-binding Rossmann-like Domain"/>
    <property type="match status" value="1"/>
</dbReference>
<dbReference type="HAMAP" id="MF_00435">
    <property type="entry name" value="IlvC"/>
    <property type="match status" value="1"/>
</dbReference>
<dbReference type="InterPro" id="IPR008927">
    <property type="entry name" value="6-PGluconate_DH-like_C_sf"/>
</dbReference>
<dbReference type="InterPro" id="IPR013023">
    <property type="entry name" value="KARI"/>
</dbReference>
<dbReference type="InterPro" id="IPR000506">
    <property type="entry name" value="KARI_C"/>
</dbReference>
<dbReference type="InterPro" id="IPR013116">
    <property type="entry name" value="KARI_N"/>
</dbReference>
<dbReference type="InterPro" id="IPR014359">
    <property type="entry name" value="KARI_prok"/>
</dbReference>
<dbReference type="InterPro" id="IPR036291">
    <property type="entry name" value="NAD(P)-bd_dom_sf"/>
</dbReference>
<dbReference type="NCBIfam" id="TIGR00465">
    <property type="entry name" value="ilvC"/>
    <property type="match status" value="1"/>
</dbReference>
<dbReference type="NCBIfam" id="NF004017">
    <property type="entry name" value="PRK05479.1"/>
    <property type="match status" value="1"/>
</dbReference>
<dbReference type="NCBIfam" id="NF009940">
    <property type="entry name" value="PRK13403.1"/>
    <property type="match status" value="1"/>
</dbReference>
<dbReference type="PANTHER" id="PTHR21371">
    <property type="entry name" value="KETOL-ACID REDUCTOISOMERASE, MITOCHONDRIAL"/>
    <property type="match status" value="1"/>
</dbReference>
<dbReference type="PANTHER" id="PTHR21371:SF1">
    <property type="entry name" value="KETOL-ACID REDUCTOISOMERASE, MITOCHONDRIAL"/>
    <property type="match status" value="1"/>
</dbReference>
<dbReference type="Pfam" id="PF01450">
    <property type="entry name" value="KARI_C"/>
    <property type="match status" value="1"/>
</dbReference>
<dbReference type="Pfam" id="PF07991">
    <property type="entry name" value="KARI_N"/>
    <property type="match status" value="1"/>
</dbReference>
<dbReference type="PIRSF" id="PIRSF000116">
    <property type="entry name" value="IlvC_gammaproteo"/>
    <property type="match status" value="1"/>
</dbReference>
<dbReference type="SUPFAM" id="SSF48179">
    <property type="entry name" value="6-phosphogluconate dehydrogenase C-terminal domain-like"/>
    <property type="match status" value="1"/>
</dbReference>
<dbReference type="SUPFAM" id="SSF51735">
    <property type="entry name" value="NAD(P)-binding Rossmann-fold domains"/>
    <property type="match status" value="1"/>
</dbReference>
<dbReference type="PROSITE" id="PS51851">
    <property type="entry name" value="KARI_C"/>
    <property type="match status" value="1"/>
</dbReference>
<dbReference type="PROSITE" id="PS51850">
    <property type="entry name" value="KARI_N"/>
    <property type="match status" value="1"/>
</dbReference>
<keyword id="KW-0028">Amino-acid biosynthesis</keyword>
<keyword id="KW-0100">Branched-chain amino acid biosynthesis</keyword>
<keyword id="KW-0460">Magnesium</keyword>
<keyword id="KW-0479">Metal-binding</keyword>
<keyword id="KW-0521">NADP</keyword>
<keyword id="KW-0560">Oxidoreductase</keyword>